<sequence>MSKIDTIIEMIEGLNVLELVELKKKMEEKWGVTAAAPVMAMGVAAPVAAAGDGAAAAAPAEEKTEFDVILKEAGPNKIQVIKVVRELTSLGLKEAKDLVEGAPKPVREGVSKEEAEAAKAKLTEVGAVVEIK</sequence>
<dbReference type="EMBL" id="CP001337">
    <property type="protein sequence ID" value="ACL24378.1"/>
    <property type="molecule type" value="Genomic_DNA"/>
</dbReference>
<dbReference type="RefSeq" id="WP_015940237.1">
    <property type="nucleotide sequence ID" value="NC_011831.1"/>
</dbReference>
<dbReference type="SMR" id="B8G988"/>
<dbReference type="STRING" id="326427.Cagg_1473"/>
<dbReference type="KEGG" id="cag:Cagg_1473"/>
<dbReference type="eggNOG" id="COG0222">
    <property type="taxonomic scope" value="Bacteria"/>
</dbReference>
<dbReference type="HOGENOM" id="CLU_086499_3_2_0"/>
<dbReference type="OrthoDB" id="9811748at2"/>
<dbReference type="Proteomes" id="UP000002508">
    <property type="component" value="Chromosome"/>
</dbReference>
<dbReference type="GO" id="GO:0022625">
    <property type="term" value="C:cytosolic large ribosomal subunit"/>
    <property type="evidence" value="ECO:0007669"/>
    <property type="project" value="TreeGrafter"/>
</dbReference>
<dbReference type="GO" id="GO:0003729">
    <property type="term" value="F:mRNA binding"/>
    <property type="evidence" value="ECO:0007669"/>
    <property type="project" value="TreeGrafter"/>
</dbReference>
<dbReference type="GO" id="GO:0003735">
    <property type="term" value="F:structural constituent of ribosome"/>
    <property type="evidence" value="ECO:0007669"/>
    <property type="project" value="InterPro"/>
</dbReference>
<dbReference type="GO" id="GO:0006412">
    <property type="term" value="P:translation"/>
    <property type="evidence" value="ECO:0007669"/>
    <property type="project" value="UniProtKB-UniRule"/>
</dbReference>
<dbReference type="CDD" id="cd00387">
    <property type="entry name" value="Ribosomal_L7_L12"/>
    <property type="match status" value="1"/>
</dbReference>
<dbReference type="FunFam" id="1.20.5.710:FF:000007">
    <property type="entry name" value="50S ribosomal protein L7/L12"/>
    <property type="match status" value="1"/>
</dbReference>
<dbReference type="FunFam" id="3.30.1390.10:FF:000001">
    <property type="entry name" value="50S ribosomal protein L7/L12"/>
    <property type="match status" value="1"/>
</dbReference>
<dbReference type="Gene3D" id="3.30.1390.10">
    <property type="match status" value="1"/>
</dbReference>
<dbReference type="Gene3D" id="1.20.5.710">
    <property type="entry name" value="Single helix bin"/>
    <property type="match status" value="1"/>
</dbReference>
<dbReference type="HAMAP" id="MF_00368">
    <property type="entry name" value="Ribosomal_bL12"/>
    <property type="match status" value="1"/>
</dbReference>
<dbReference type="InterPro" id="IPR000206">
    <property type="entry name" value="Ribosomal_bL12"/>
</dbReference>
<dbReference type="InterPro" id="IPR013823">
    <property type="entry name" value="Ribosomal_bL12_C"/>
</dbReference>
<dbReference type="InterPro" id="IPR014719">
    <property type="entry name" value="Ribosomal_bL12_C/ClpS-like"/>
</dbReference>
<dbReference type="InterPro" id="IPR008932">
    <property type="entry name" value="Ribosomal_bL12_oligo"/>
</dbReference>
<dbReference type="InterPro" id="IPR036235">
    <property type="entry name" value="Ribosomal_bL12_oligo_N_sf"/>
</dbReference>
<dbReference type="NCBIfam" id="TIGR00855">
    <property type="entry name" value="L12"/>
    <property type="match status" value="1"/>
</dbReference>
<dbReference type="PANTHER" id="PTHR45987">
    <property type="entry name" value="39S RIBOSOMAL PROTEIN L12"/>
    <property type="match status" value="1"/>
</dbReference>
<dbReference type="PANTHER" id="PTHR45987:SF4">
    <property type="entry name" value="LARGE RIBOSOMAL SUBUNIT PROTEIN BL12M"/>
    <property type="match status" value="1"/>
</dbReference>
<dbReference type="Pfam" id="PF00542">
    <property type="entry name" value="Ribosomal_L12"/>
    <property type="match status" value="1"/>
</dbReference>
<dbReference type="Pfam" id="PF16320">
    <property type="entry name" value="Ribosomal_L12_N"/>
    <property type="match status" value="1"/>
</dbReference>
<dbReference type="SUPFAM" id="SSF54736">
    <property type="entry name" value="ClpS-like"/>
    <property type="match status" value="1"/>
</dbReference>
<dbReference type="SUPFAM" id="SSF48300">
    <property type="entry name" value="Ribosomal protein L7/12, oligomerisation (N-terminal) domain"/>
    <property type="match status" value="1"/>
</dbReference>
<gene>
    <name evidence="1" type="primary">rplL</name>
    <name type="ordered locus">Cagg_1473</name>
</gene>
<reference key="1">
    <citation type="submission" date="2008-12" db="EMBL/GenBank/DDBJ databases">
        <title>Complete sequence of Chloroflexus aggregans DSM 9485.</title>
        <authorList>
            <consortium name="US DOE Joint Genome Institute"/>
            <person name="Lucas S."/>
            <person name="Copeland A."/>
            <person name="Lapidus A."/>
            <person name="Glavina del Rio T."/>
            <person name="Dalin E."/>
            <person name="Tice H."/>
            <person name="Pitluck S."/>
            <person name="Foster B."/>
            <person name="Larimer F."/>
            <person name="Land M."/>
            <person name="Hauser L."/>
            <person name="Kyrpides N."/>
            <person name="Mikhailova N."/>
            <person name="Bryant D.A."/>
            <person name="Richardson P."/>
        </authorList>
    </citation>
    <scope>NUCLEOTIDE SEQUENCE [LARGE SCALE GENOMIC DNA]</scope>
    <source>
        <strain>MD-66 / DSM 9485</strain>
    </source>
</reference>
<feature type="chain" id="PRO_1000195782" description="Large ribosomal subunit protein bL12">
    <location>
        <begin position="1"/>
        <end position="132"/>
    </location>
</feature>
<accession>B8G988</accession>
<evidence type="ECO:0000255" key="1">
    <source>
        <dbReference type="HAMAP-Rule" id="MF_00368"/>
    </source>
</evidence>
<evidence type="ECO:0000305" key="2"/>
<name>RL7_CHLAD</name>
<protein>
    <recommendedName>
        <fullName evidence="1">Large ribosomal subunit protein bL12</fullName>
    </recommendedName>
    <alternativeName>
        <fullName evidence="2">50S ribosomal protein L7/L12</fullName>
    </alternativeName>
</protein>
<proteinExistence type="inferred from homology"/>
<organism>
    <name type="scientific">Chloroflexus aggregans (strain MD-66 / DSM 9485)</name>
    <dbReference type="NCBI Taxonomy" id="326427"/>
    <lineage>
        <taxon>Bacteria</taxon>
        <taxon>Bacillati</taxon>
        <taxon>Chloroflexota</taxon>
        <taxon>Chloroflexia</taxon>
        <taxon>Chloroflexales</taxon>
        <taxon>Chloroflexineae</taxon>
        <taxon>Chloroflexaceae</taxon>
        <taxon>Chloroflexus</taxon>
    </lineage>
</organism>
<comment type="function">
    <text evidence="1">Forms part of the ribosomal stalk which helps the ribosome interact with GTP-bound translation factors. Is thus essential for accurate translation.</text>
</comment>
<comment type="subunit">
    <text evidence="1">Homodimer. Part of the ribosomal stalk of the 50S ribosomal subunit. Forms a multimeric L10(L12)X complex, where L10 forms an elongated spine to which 2 to 4 L12 dimers bind in a sequential fashion. Binds GTP-bound translation factors.</text>
</comment>
<comment type="similarity">
    <text evidence="1">Belongs to the bacterial ribosomal protein bL12 family.</text>
</comment>
<keyword id="KW-0687">Ribonucleoprotein</keyword>
<keyword id="KW-0689">Ribosomal protein</keyword>